<feature type="chain" id="PRO_0000248405" description="Sterol esterase 2">
    <location>
        <begin position="1"/>
        <end position="538"/>
    </location>
</feature>
<feature type="topological domain" description="Cytoplasmic" evidence="6">
    <location>
        <begin position="1"/>
        <end position="11"/>
    </location>
</feature>
<feature type="transmembrane region" description="Helical; Signal-anchor for type II membrane protein" evidence="2">
    <location>
        <begin position="12"/>
        <end position="32"/>
    </location>
</feature>
<feature type="topological domain" description="Lumenal" evidence="6">
    <location>
        <begin position="33"/>
        <end position="538"/>
    </location>
</feature>
<feature type="region of interest" description="Disordered" evidence="3">
    <location>
        <begin position="42"/>
        <end position="87"/>
    </location>
</feature>
<feature type="compositionally biased region" description="Basic residues" evidence="3">
    <location>
        <begin position="60"/>
        <end position="70"/>
    </location>
</feature>
<feature type="active site" description="Nucleophile" evidence="1">
    <location>
        <position position="287"/>
    </location>
</feature>
<feature type="active site" description="Charge relay system" evidence="1">
    <location>
        <position position="480"/>
    </location>
</feature>
<feature type="active site" description="Charge relay system" evidence="1">
    <location>
        <position position="511"/>
    </location>
</feature>
<feature type="modified residue" description="Phosphoserine" evidence="8 9 10">
    <location>
        <position position="73"/>
    </location>
</feature>
<feature type="modified residue" description="Phosphoserine" evidence="10">
    <location>
        <position position="107"/>
    </location>
</feature>
<sequence length="538" mass="62447">MVNKVVDEVQRLVSAIILTSFMTGLFILSLWKNYVTVHFQHKNDPRDTRSSRTKIQPNDKKKKRPARHSRPLSISSTTPLDLQRDQENNIEYDRTVTSKLSMTSNASLSENGDGNANIKMETNVNQAPYAAENPFQNIALAEDTKLVPDLKYYYKEYGIDIEEFEVETDDGFIIDLWHFKSRLNDGVEEVKREPILLLHGLLQSCGAFASSGRKSLAYFLYESGFDVWLGNNRCGLNAKWNMKKLGNDHSKKWDWDMHQMVQYDLKALINYVLDSTGYAKLSLVAHSQGTTQGFMGLVNGEKLYASDFKLVDKLENFVALAPAVYPGPLLDEKAFVRLMAKGIDSPWYFGRRSFIPLMMTMRKLMVGTKIFSFLSYIMFNYLFDWNDVLWDRVLRDRNFLFSPVHISVKLMQWWLSPLPNKLSFKKGAEKIFPDKKTWFPIAKNDDDSGNNLDNNKLHLNPKRQNSEEFPHIIMFIPKQDRLVDGERLINHFINHEANAVYKIWYIDEYSHLDVLWAHDVIDRIGKPMIENLRFPNAR</sequence>
<organism>
    <name type="scientific">Saccharomyces cerevisiae (strain ATCC 204508 / S288c)</name>
    <name type="common">Baker's yeast</name>
    <dbReference type="NCBI Taxonomy" id="559292"/>
    <lineage>
        <taxon>Eukaryota</taxon>
        <taxon>Fungi</taxon>
        <taxon>Dikarya</taxon>
        <taxon>Ascomycota</taxon>
        <taxon>Saccharomycotina</taxon>
        <taxon>Saccharomycetes</taxon>
        <taxon>Saccharomycetales</taxon>
        <taxon>Saccharomycetaceae</taxon>
        <taxon>Saccharomyces</taxon>
    </lineage>
</organism>
<protein>
    <recommendedName>
        <fullName>Sterol esterase 2</fullName>
        <ecNumber evidence="5 6">3.1.1.13</ecNumber>
    </recommendedName>
    <alternativeName>
        <fullName>Steryl ester hydrolase 2</fullName>
    </alternativeName>
</protein>
<dbReference type="EC" id="3.1.1.13" evidence="5 6"/>
<dbReference type="EMBL" id="Z73192">
    <property type="protein sequence ID" value="CAA97543.1"/>
    <property type="molecule type" value="Genomic_DNA"/>
</dbReference>
<dbReference type="EMBL" id="BK006945">
    <property type="protein sequence ID" value="DAA09338.1"/>
    <property type="molecule type" value="Genomic_DNA"/>
</dbReference>
<dbReference type="PIR" id="S64842">
    <property type="entry name" value="S64842"/>
</dbReference>
<dbReference type="RefSeq" id="NP_013120.1">
    <property type="nucleotide sequence ID" value="NM_001181907.1"/>
</dbReference>
<dbReference type="SMR" id="Q07950"/>
<dbReference type="BioGRID" id="31294">
    <property type="interactions" value="57"/>
</dbReference>
<dbReference type="FunCoup" id="Q07950">
    <property type="interactions" value="34"/>
</dbReference>
<dbReference type="IntAct" id="Q07950">
    <property type="interactions" value="2"/>
</dbReference>
<dbReference type="MINT" id="Q07950"/>
<dbReference type="STRING" id="4932.YLR020C"/>
<dbReference type="ESTHER" id="yeast-YLR020C">
    <property type="family name" value="Acidic_Lipase"/>
</dbReference>
<dbReference type="iPTMnet" id="Q07950"/>
<dbReference type="PaxDb" id="4932-YLR020C"/>
<dbReference type="PeptideAtlas" id="Q07950"/>
<dbReference type="EnsemblFungi" id="YLR020C_mRNA">
    <property type="protein sequence ID" value="YLR020C"/>
    <property type="gene ID" value="YLR020C"/>
</dbReference>
<dbReference type="GeneID" id="850707"/>
<dbReference type="KEGG" id="sce:YLR020C"/>
<dbReference type="AGR" id="SGD:S000004010"/>
<dbReference type="SGD" id="S000004010">
    <property type="gene designation" value="YEH2"/>
</dbReference>
<dbReference type="VEuPathDB" id="FungiDB:YLR020C"/>
<dbReference type="eggNOG" id="KOG2624">
    <property type="taxonomic scope" value="Eukaryota"/>
</dbReference>
<dbReference type="GeneTree" id="ENSGT00940000176565"/>
<dbReference type="HOGENOM" id="CLU_024238_3_1_1"/>
<dbReference type="InParanoid" id="Q07950"/>
<dbReference type="OMA" id="DAVEWCF"/>
<dbReference type="OrthoDB" id="6130531at2759"/>
<dbReference type="BioCyc" id="MetaCyc:G3O-32181-MONOMER"/>
<dbReference type="BioCyc" id="YEAST:G3O-32181-MONOMER"/>
<dbReference type="BRENDA" id="3.1.1.13">
    <property type="organism ID" value="984"/>
</dbReference>
<dbReference type="Reactome" id="R-SCE-192456">
    <property type="pathway name" value="Digestion of dietary lipid"/>
</dbReference>
<dbReference type="Reactome" id="R-SCE-6809371">
    <property type="pathway name" value="Formation of the cornified envelope"/>
</dbReference>
<dbReference type="BioGRID-ORCS" id="850707">
    <property type="hits" value="9 hits in 10 CRISPR screens"/>
</dbReference>
<dbReference type="PRO" id="PR:Q07950"/>
<dbReference type="Proteomes" id="UP000002311">
    <property type="component" value="Chromosome XII"/>
</dbReference>
<dbReference type="RNAct" id="Q07950">
    <property type="molecule type" value="protein"/>
</dbReference>
<dbReference type="GO" id="GO:0071944">
    <property type="term" value="C:cell periphery"/>
    <property type="evidence" value="ECO:0007005"/>
    <property type="project" value="SGD"/>
</dbReference>
<dbReference type="GO" id="GO:0016020">
    <property type="term" value="C:membrane"/>
    <property type="evidence" value="ECO:0000314"/>
    <property type="project" value="SGD"/>
</dbReference>
<dbReference type="GO" id="GO:0005886">
    <property type="term" value="C:plasma membrane"/>
    <property type="evidence" value="ECO:0000314"/>
    <property type="project" value="SGD"/>
</dbReference>
<dbReference type="GO" id="GO:0004771">
    <property type="term" value="F:sterol ester esterase activity"/>
    <property type="evidence" value="ECO:0000314"/>
    <property type="project" value="SGD"/>
</dbReference>
<dbReference type="GO" id="GO:0000032">
    <property type="term" value="P:cell wall mannoprotein biosynthetic process"/>
    <property type="evidence" value="ECO:0000315"/>
    <property type="project" value="SGD"/>
</dbReference>
<dbReference type="GO" id="GO:0016042">
    <property type="term" value="P:lipid catabolic process"/>
    <property type="evidence" value="ECO:0007669"/>
    <property type="project" value="UniProtKB-KW"/>
</dbReference>
<dbReference type="GO" id="GO:0016125">
    <property type="term" value="P:sterol metabolic process"/>
    <property type="evidence" value="ECO:0000315"/>
    <property type="project" value="SGD"/>
</dbReference>
<dbReference type="FunFam" id="3.40.50.1820:FF:000108">
    <property type="entry name" value="Lipid particle protein"/>
    <property type="match status" value="1"/>
</dbReference>
<dbReference type="Gene3D" id="3.40.50.1820">
    <property type="entry name" value="alpha/beta hydrolase"/>
    <property type="match status" value="1"/>
</dbReference>
<dbReference type="InterPro" id="IPR029058">
    <property type="entry name" value="AB_hydrolase_fold"/>
</dbReference>
<dbReference type="InterPro" id="IPR006693">
    <property type="entry name" value="AB_hydrolase_lipase"/>
</dbReference>
<dbReference type="PANTHER" id="PTHR11005">
    <property type="entry name" value="LYSOSOMAL ACID LIPASE-RELATED"/>
    <property type="match status" value="1"/>
</dbReference>
<dbReference type="Pfam" id="PF04083">
    <property type="entry name" value="Abhydro_lipase"/>
    <property type="match status" value="1"/>
</dbReference>
<dbReference type="SUPFAM" id="SSF53474">
    <property type="entry name" value="alpha/beta-Hydrolases"/>
    <property type="match status" value="1"/>
</dbReference>
<comment type="function">
    <text evidence="5 6">Mediates the hydrolysis of steryl esters. Required for mobilization of steryl ester, thereby playing a central role in lipid metabolism.</text>
</comment>
<comment type="catalytic activity">
    <reaction evidence="6">
        <text>a sterol ester + H2O = a sterol + a fatty acid + H(+)</text>
        <dbReference type="Rhea" id="RHEA:10100"/>
        <dbReference type="ChEBI" id="CHEBI:15377"/>
        <dbReference type="ChEBI" id="CHEBI:15378"/>
        <dbReference type="ChEBI" id="CHEBI:15889"/>
        <dbReference type="ChEBI" id="CHEBI:28868"/>
        <dbReference type="ChEBI" id="CHEBI:35915"/>
        <dbReference type="EC" id="3.1.1.13"/>
    </reaction>
</comment>
<comment type="subcellular location">
    <subcellularLocation>
        <location evidence="5 6">Cell membrane</location>
        <topology evidence="5 6">Single-pass type II membrane protein</topology>
    </subcellularLocation>
</comment>
<comment type="PTM">
    <text>Not glycosylated.</text>
</comment>
<comment type="miscellaneous">
    <text evidence="4">Present with 1630 molecules/cell in log phase SD medium.</text>
</comment>
<comment type="similarity">
    <text evidence="7">Belongs to the AB hydrolase superfamily.</text>
</comment>
<gene>
    <name type="primary">YEH2</name>
    <name type="ordered locus">YLR020C</name>
</gene>
<evidence type="ECO:0000250" key="1"/>
<evidence type="ECO:0000255" key="2"/>
<evidence type="ECO:0000256" key="3">
    <source>
        <dbReference type="SAM" id="MobiDB-lite"/>
    </source>
</evidence>
<evidence type="ECO:0000269" key="4">
    <source>
    </source>
</evidence>
<evidence type="ECO:0000269" key="5">
    <source>
    </source>
</evidence>
<evidence type="ECO:0000269" key="6">
    <source>
    </source>
</evidence>
<evidence type="ECO:0000305" key="7"/>
<evidence type="ECO:0007744" key="8">
    <source>
    </source>
</evidence>
<evidence type="ECO:0007744" key="9">
    <source>
    </source>
</evidence>
<evidence type="ECO:0007744" key="10">
    <source>
    </source>
</evidence>
<reference key="1">
    <citation type="journal article" date="1997" name="Nature">
        <title>The nucleotide sequence of Saccharomyces cerevisiae chromosome XII.</title>
        <authorList>
            <person name="Johnston M."/>
            <person name="Hillier L.W."/>
            <person name="Riles L."/>
            <person name="Albermann K."/>
            <person name="Andre B."/>
            <person name="Ansorge W."/>
            <person name="Benes V."/>
            <person name="Brueckner M."/>
            <person name="Delius H."/>
            <person name="Dubois E."/>
            <person name="Duesterhoeft A."/>
            <person name="Entian K.-D."/>
            <person name="Floeth M."/>
            <person name="Goffeau A."/>
            <person name="Hebling U."/>
            <person name="Heumann K."/>
            <person name="Heuss-Neitzel D."/>
            <person name="Hilbert H."/>
            <person name="Hilger F."/>
            <person name="Kleine K."/>
            <person name="Koetter P."/>
            <person name="Louis E.J."/>
            <person name="Messenguy F."/>
            <person name="Mewes H.-W."/>
            <person name="Miosga T."/>
            <person name="Moestl D."/>
            <person name="Mueller-Auer S."/>
            <person name="Nentwich U."/>
            <person name="Obermaier B."/>
            <person name="Piravandi E."/>
            <person name="Pohl T.M."/>
            <person name="Portetelle D."/>
            <person name="Purnelle B."/>
            <person name="Rechmann S."/>
            <person name="Rieger M."/>
            <person name="Rinke M."/>
            <person name="Rose M."/>
            <person name="Scharfe M."/>
            <person name="Scherens B."/>
            <person name="Scholler P."/>
            <person name="Schwager C."/>
            <person name="Schwarz S."/>
            <person name="Underwood A.P."/>
            <person name="Urrestarazu L.A."/>
            <person name="Vandenbol M."/>
            <person name="Verhasselt P."/>
            <person name="Vierendeels F."/>
            <person name="Voet M."/>
            <person name="Volckaert G."/>
            <person name="Voss H."/>
            <person name="Wambutt R."/>
            <person name="Wedler E."/>
            <person name="Wedler H."/>
            <person name="Zimmermann F.K."/>
            <person name="Zollner A."/>
            <person name="Hani J."/>
            <person name="Hoheisel J.D."/>
        </authorList>
    </citation>
    <scope>NUCLEOTIDE SEQUENCE [LARGE SCALE GENOMIC DNA]</scope>
    <source>
        <strain>ATCC 204508 / S288c</strain>
    </source>
</reference>
<reference key="2">
    <citation type="journal article" date="2014" name="G3 (Bethesda)">
        <title>The reference genome sequence of Saccharomyces cerevisiae: Then and now.</title>
        <authorList>
            <person name="Engel S.R."/>
            <person name="Dietrich F.S."/>
            <person name="Fisk D.G."/>
            <person name="Binkley G."/>
            <person name="Balakrishnan R."/>
            <person name="Costanzo M.C."/>
            <person name="Dwight S.S."/>
            <person name="Hitz B.C."/>
            <person name="Karra K."/>
            <person name="Nash R.S."/>
            <person name="Weng S."/>
            <person name="Wong E.D."/>
            <person name="Lloyd P."/>
            <person name="Skrzypek M.S."/>
            <person name="Miyasato S.R."/>
            <person name="Simison M."/>
            <person name="Cherry J.M."/>
        </authorList>
    </citation>
    <scope>GENOME REANNOTATION</scope>
    <source>
        <strain>ATCC 204508 / S288c</strain>
    </source>
</reference>
<reference key="3">
    <citation type="journal article" date="2003" name="Nature">
        <title>Global analysis of protein expression in yeast.</title>
        <authorList>
            <person name="Ghaemmaghami S."/>
            <person name="Huh W.-K."/>
            <person name="Bower K."/>
            <person name="Howson R.W."/>
            <person name="Belle A."/>
            <person name="Dephoure N."/>
            <person name="O'Shea E.K."/>
            <person name="Weissman J.S."/>
        </authorList>
    </citation>
    <scope>LEVEL OF PROTEIN EXPRESSION [LARGE SCALE ANALYSIS]</scope>
</reference>
<reference key="4">
    <citation type="journal article" date="2005" name="J. Biol. Chem.">
        <title>YEH2/YLR020c encodes a novel steryl ester hydrolase of the yeast Saccharomyces cerevisiae.</title>
        <authorList>
            <person name="Muellner H."/>
            <person name="Deutsch G."/>
            <person name="Leitner E."/>
            <person name="Ingolic E."/>
            <person name="Daum G."/>
        </authorList>
    </citation>
    <scope>FUNCTION</scope>
    <scope>SUBCELLULAR LOCATION</scope>
    <scope>CATALYTIC ACTIVITY</scope>
</reference>
<reference key="5">
    <citation type="journal article" date="2005" name="Mol. Cell. Biol.">
        <title>The Saccharomyces cerevisiae YLL012/YEH1, YLR020/YEH2, and TGL1 genes encode a novel family of membrane-anchored lipases that are required for steryl ester hydrolysis.</title>
        <authorList>
            <person name="Koeffel R."/>
            <person name="Tiwari R."/>
            <person name="Falquet L."/>
            <person name="Schneiter R."/>
        </authorList>
    </citation>
    <scope>FUNCTION</scope>
    <scope>SUBCELLULAR LOCATION</scope>
    <scope>LACK OF GLYCOSYLATION</scope>
    <scope>MEMBRANE TOPOLOGY</scope>
    <scope>CATALYTIC ACTIVITY</scope>
</reference>
<reference key="6">
    <citation type="journal article" date="2007" name="J. Proteome Res.">
        <title>Large-scale phosphorylation analysis of alpha-factor-arrested Saccharomyces cerevisiae.</title>
        <authorList>
            <person name="Li X."/>
            <person name="Gerber S.A."/>
            <person name="Rudner A.D."/>
            <person name="Beausoleil S.A."/>
            <person name="Haas W."/>
            <person name="Villen J."/>
            <person name="Elias J.E."/>
            <person name="Gygi S.P."/>
        </authorList>
    </citation>
    <scope>PHOSPHORYLATION [LARGE SCALE ANALYSIS] AT SER-73</scope>
    <scope>IDENTIFICATION BY MASS SPECTROMETRY [LARGE SCALE ANALYSIS]</scope>
    <source>
        <strain>ADR376</strain>
    </source>
</reference>
<reference key="7">
    <citation type="journal article" date="2008" name="Mol. Cell. Proteomics">
        <title>A multidimensional chromatography technology for in-depth phosphoproteome analysis.</title>
        <authorList>
            <person name="Albuquerque C.P."/>
            <person name="Smolka M.B."/>
            <person name="Payne S.H."/>
            <person name="Bafna V."/>
            <person name="Eng J."/>
            <person name="Zhou H."/>
        </authorList>
    </citation>
    <scope>PHOSPHORYLATION [LARGE SCALE ANALYSIS] AT SER-73</scope>
    <scope>IDENTIFICATION BY MASS SPECTROMETRY [LARGE SCALE ANALYSIS]</scope>
</reference>
<reference key="8">
    <citation type="journal article" date="2009" name="Science">
        <title>Global analysis of Cdk1 substrate phosphorylation sites provides insights into evolution.</title>
        <authorList>
            <person name="Holt L.J."/>
            <person name="Tuch B.B."/>
            <person name="Villen J."/>
            <person name="Johnson A.D."/>
            <person name="Gygi S.P."/>
            <person name="Morgan D.O."/>
        </authorList>
    </citation>
    <scope>PHOSPHORYLATION [LARGE SCALE ANALYSIS] AT SER-73 AND SER-107</scope>
    <scope>IDENTIFICATION BY MASS SPECTROMETRY [LARGE SCALE ANALYSIS]</scope>
</reference>
<accession>Q07950</accession>
<accession>D6VY22</accession>
<proteinExistence type="evidence at protein level"/>
<name>YEH2_YEAST</name>
<keyword id="KW-1003">Cell membrane</keyword>
<keyword id="KW-0378">Hydrolase</keyword>
<keyword id="KW-0442">Lipid degradation</keyword>
<keyword id="KW-0443">Lipid metabolism</keyword>
<keyword id="KW-0472">Membrane</keyword>
<keyword id="KW-0597">Phosphoprotein</keyword>
<keyword id="KW-1185">Reference proteome</keyword>
<keyword id="KW-0735">Signal-anchor</keyword>
<keyword id="KW-0812">Transmembrane</keyword>
<keyword id="KW-1133">Transmembrane helix</keyword>